<protein>
    <recommendedName>
        <fullName evidence="1">Probable GTP-binding protein EngB</fullName>
    </recommendedName>
</protein>
<feature type="chain" id="PRO_0000266900" description="Probable GTP-binding protein EngB">
    <location>
        <begin position="1"/>
        <end position="186"/>
    </location>
</feature>
<feature type="domain" description="EngB-type G" evidence="1">
    <location>
        <begin position="18"/>
        <end position="186"/>
    </location>
</feature>
<feature type="binding site" evidence="1">
    <location>
        <begin position="26"/>
        <end position="33"/>
    </location>
    <ligand>
        <name>GTP</name>
        <dbReference type="ChEBI" id="CHEBI:37565"/>
    </ligand>
</feature>
<feature type="binding site" evidence="1">
    <location>
        <position position="33"/>
    </location>
    <ligand>
        <name>Mg(2+)</name>
        <dbReference type="ChEBI" id="CHEBI:18420"/>
    </ligand>
</feature>
<feature type="binding site" evidence="1">
    <location>
        <begin position="52"/>
        <end position="56"/>
    </location>
    <ligand>
        <name>GTP</name>
        <dbReference type="ChEBI" id="CHEBI:37565"/>
    </ligand>
</feature>
<feature type="binding site" evidence="1">
    <location>
        <position position="54"/>
    </location>
    <ligand>
        <name>Mg(2+)</name>
        <dbReference type="ChEBI" id="CHEBI:18420"/>
    </ligand>
</feature>
<feature type="binding site" evidence="1">
    <location>
        <begin position="69"/>
        <end position="72"/>
    </location>
    <ligand>
        <name>GTP</name>
        <dbReference type="ChEBI" id="CHEBI:37565"/>
    </ligand>
</feature>
<feature type="binding site" evidence="1">
    <location>
        <begin position="135"/>
        <end position="138"/>
    </location>
    <ligand>
        <name>GTP</name>
        <dbReference type="ChEBI" id="CHEBI:37565"/>
    </ligand>
</feature>
<feature type="binding site" evidence="1">
    <location>
        <begin position="166"/>
        <end position="168"/>
    </location>
    <ligand>
        <name>GTP</name>
        <dbReference type="ChEBI" id="CHEBI:37565"/>
    </ligand>
</feature>
<comment type="function">
    <text evidence="1">Necessary for normal cell division and for the maintenance of normal septation.</text>
</comment>
<comment type="cofactor">
    <cofactor evidence="1">
        <name>Mg(2+)</name>
        <dbReference type="ChEBI" id="CHEBI:18420"/>
    </cofactor>
</comment>
<comment type="similarity">
    <text evidence="1">Belongs to the TRAFAC class TrmE-Era-EngA-EngB-Septin-like GTPase superfamily. EngB GTPase family.</text>
</comment>
<dbReference type="EMBL" id="BA000026">
    <property type="protein sequence ID" value="BAC43831.1"/>
    <property type="molecule type" value="Genomic_DNA"/>
</dbReference>
<dbReference type="RefSeq" id="WP_011076867.1">
    <property type="nucleotide sequence ID" value="NC_004432.1"/>
</dbReference>
<dbReference type="SMR" id="Q8EX09"/>
<dbReference type="FunCoup" id="Q8EX09">
    <property type="interactions" value="179"/>
</dbReference>
<dbReference type="STRING" id="272633.gene:10731132"/>
<dbReference type="KEGG" id="mpe:MYPE410"/>
<dbReference type="eggNOG" id="COG0218">
    <property type="taxonomic scope" value="Bacteria"/>
</dbReference>
<dbReference type="HOGENOM" id="CLU_033732_3_0_14"/>
<dbReference type="InParanoid" id="Q8EX09"/>
<dbReference type="Proteomes" id="UP000002522">
    <property type="component" value="Chromosome"/>
</dbReference>
<dbReference type="GO" id="GO:0005829">
    <property type="term" value="C:cytosol"/>
    <property type="evidence" value="ECO:0007669"/>
    <property type="project" value="TreeGrafter"/>
</dbReference>
<dbReference type="GO" id="GO:0005525">
    <property type="term" value="F:GTP binding"/>
    <property type="evidence" value="ECO:0007669"/>
    <property type="project" value="UniProtKB-UniRule"/>
</dbReference>
<dbReference type="GO" id="GO:0046872">
    <property type="term" value="F:metal ion binding"/>
    <property type="evidence" value="ECO:0007669"/>
    <property type="project" value="UniProtKB-KW"/>
</dbReference>
<dbReference type="GO" id="GO:0000917">
    <property type="term" value="P:division septum assembly"/>
    <property type="evidence" value="ECO:0007669"/>
    <property type="project" value="UniProtKB-KW"/>
</dbReference>
<dbReference type="CDD" id="cd01876">
    <property type="entry name" value="YihA_EngB"/>
    <property type="match status" value="1"/>
</dbReference>
<dbReference type="Gene3D" id="3.40.50.300">
    <property type="entry name" value="P-loop containing nucleotide triphosphate hydrolases"/>
    <property type="match status" value="1"/>
</dbReference>
<dbReference type="HAMAP" id="MF_00321">
    <property type="entry name" value="GTPase_EngB"/>
    <property type="match status" value="1"/>
</dbReference>
<dbReference type="InterPro" id="IPR030393">
    <property type="entry name" value="G_ENGB_dom"/>
</dbReference>
<dbReference type="InterPro" id="IPR006073">
    <property type="entry name" value="GTP-bd"/>
</dbReference>
<dbReference type="InterPro" id="IPR019987">
    <property type="entry name" value="GTP-bd_ribosome_bio_YsxC"/>
</dbReference>
<dbReference type="InterPro" id="IPR027417">
    <property type="entry name" value="P-loop_NTPase"/>
</dbReference>
<dbReference type="NCBIfam" id="TIGR03598">
    <property type="entry name" value="GTPase_YsxC"/>
    <property type="match status" value="1"/>
</dbReference>
<dbReference type="PANTHER" id="PTHR11649:SF13">
    <property type="entry name" value="ENGB-TYPE G DOMAIN-CONTAINING PROTEIN"/>
    <property type="match status" value="1"/>
</dbReference>
<dbReference type="PANTHER" id="PTHR11649">
    <property type="entry name" value="MSS1/TRME-RELATED GTP-BINDING PROTEIN"/>
    <property type="match status" value="1"/>
</dbReference>
<dbReference type="Pfam" id="PF01926">
    <property type="entry name" value="MMR_HSR1"/>
    <property type="match status" value="1"/>
</dbReference>
<dbReference type="SUPFAM" id="SSF52540">
    <property type="entry name" value="P-loop containing nucleoside triphosphate hydrolases"/>
    <property type="match status" value="1"/>
</dbReference>
<dbReference type="PROSITE" id="PS51706">
    <property type="entry name" value="G_ENGB"/>
    <property type="match status" value="1"/>
</dbReference>
<reference key="1">
    <citation type="journal article" date="2002" name="Nucleic Acids Res.">
        <title>The complete genomic sequence of Mycoplasma penetrans, an intracellular bacterial pathogen in humans.</title>
        <authorList>
            <person name="Sasaki Y."/>
            <person name="Ishikawa J."/>
            <person name="Yamashita A."/>
            <person name="Oshima K."/>
            <person name="Kenri T."/>
            <person name="Furuya K."/>
            <person name="Yoshino C."/>
            <person name="Horino A."/>
            <person name="Shiba T."/>
            <person name="Sasaki T."/>
            <person name="Hattori M."/>
        </authorList>
    </citation>
    <scope>NUCLEOTIDE SEQUENCE [LARGE SCALE GENOMIC DNA]</scope>
    <source>
        <strain>HF-2</strain>
    </source>
</reference>
<accession>Q8EX09</accession>
<sequence>MPSFIKSCFSSNDWITDDKKEICFIGRSNVGKSSLINALANAKIAKTSNTPGRTQLANFYDFDKFRLIDLPGYGYAKVSKSKHFELSKIISEYIYLRKNLVAVFQIIDISVITDLDLQMSELLSNRFNQHYIVLNKADKEAKSYFDNNFAKIAAKLKKDKENIVCVSAKNKTNIPNLKKLIGSVIL</sequence>
<proteinExistence type="inferred from homology"/>
<gene>
    <name evidence="1" type="primary">engB</name>
    <name type="ordered locus">MYPE410</name>
</gene>
<evidence type="ECO:0000255" key="1">
    <source>
        <dbReference type="HAMAP-Rule" id="MF_00321"/>
    </source>
</evidence>
<keyword id="KW-0131">Cell cycle</keyword>
<keyword id="KW-0132">Cell division</keyword>
<keyword id="KW-0342">GTP-binding</keyword>
<keyword id="KW-0460">Magnesium</keyword>
<keyword id="KW-0479">Metal-binding</keyword>
<keyword id="KW-0547">Nucleotide-binding</keyword>
<keyword id="KW-1185">Reference proteome</keyword>
<keyword id="KW-0717">Septation</keyword>
<name>ENGB_MALP2</name>
<organism>
    <name type="scientific">Malacoplasma penetrans (strain HF-2)</name>
    <name type="common">Mycoplasma penetrans</name>
    <dbReference type="NCBI Taxonomy" id="272633"/>
    <lineage>
        <taxon>Bacteria</taxon>
        <taxon>Bacillati</taxon>
        <taxon>Mycoplasmatota</taxon>
        <taxon>Mycoplasmoidales</taxon>
        <taxon>Mycoplasmoidaceae</taxon>
        <taxon>Malacoplasma</taxon>
    </lineage>
</organism>